<comment type="function">
    <text evidence="4 5 8 9 11 13 14 15 16 17 18 21">Transcriptional factor that can act as an activator or repressor depending on isoform and/or post-translational modifications. Binds to GT and GC boxes promoter elements. Competes with SP1 for the GC-box promoters. Weak activator of transcription but can activate a number of genes involved in different processes such as cell-cycle regulation, hormone-induction and house-keeping.</text>
</comment>
<comment type="subunit">
    <text evidence="4 6 9 16 19">Interacts with HLTF; the interaction may be required for basal transcriptional activity of HLTF. Interacts with HDAC1; the interaction deacetylates SP3 and regulates its transcriptional activity. Interacts with HDAC2 (preferably the CK2-phosphorylated form); the interaction deacetylates SP3 and regulates its transcriptional activity. Interacts with MEIS2 isoform 4 and PBX1 isoform PBX1a.</text>
</comment>
<comment type="interaction">
    <interactant intactId="EBI-348158">
        <id>Q02447</id>
    </interactant>
    <interactant intactId="EBI-10292696">
        <id>Q96Q77</id>
        <label>CIB3</label>
    </interactant>
    <organismsDiffer>false</organismsDiffer>
    <experiments>3</experiments>
</comment>
<comment type="interaction">
    <interactant intactId="EBI-348158">
        <id>Q02447</id>
    </interactant>
    <interactant intactId="EBI-78473">
        <id>P03372</id>
        <label>ESR1</label>
    </interactant>
    <organismsDiffer>false</organismsDiffer>
    <experiments>4</experiments>
</comment>
<comment type="interaction">
    <interactant intactId="EBI-348158">
        <id>Q02447</id>
    </interactant>
    <interactant intactId="EBI-466029">
        <id>P42858</id>
        <label>HTT</label>
    </interactant>
    <organismsDiffer>false</organismsDiffer>
    <experiments>4</experiments>
</comment>
<comment type="interaction">
    <interactant intactId="EBI-348158">
        <id>Q02447</id>
    </interactant>
    <interactant intactId="EBI-1389411">
        <id>Q6MZP7</id>
        <label>LIN54</label>
    </interactant>
    <organismsDiffer>false</organismsDiffer>
    <experiments>3</experiments>
</comment>
<comment type="interaction">
    <interactant intactId="EBI-348158">
        <id>Q02447</id>
    </interactant>
    <interactant intactId="EBI-745085">
        <id>Q96BD5</id>
        <label>PHF21A</label>
    </interactant>
    <organismsDiffer>false</organismsDiffer>
    <experiments>3</experiments>
</comment>
<comment type="interaction">
    <interactant intactId="EBI-348158">
        <id>Q02447</id>
    </interactant>
    <interactant intactId="EBI-1389308">
        <id>Q7Z3K3</id>
        <label>POGZ</label>
    </interactant>
    <organismsDiffer>false</organismsDiffer>
    <experiments>3</experiments>
</comment>
<comment type="interaction">
    <interactant intactId="EBI-348158">
        <id>Q02447</id>
    </interactant>
    <interactant intactId="EBI-372475">
        <id>P14678-2</id>
        <label>SNRPB</label>
    </interactant>
    <organismsDiffer>false</organismsDiffer>
    <experiments>3</experiments>
</comment>
<comment type="interaction">
    <interactant intactId="EBI-348158">
        <id>Q02447</id>
    </interactant>
    <interactant intactId="EBI-12023934">
        <id>Q5MJ10</id>
        <label>SPANXN2</label>
    </interactant>
    <organismsDiffer>false</organismsDiffer>
    <experiments>3</experiments>
</comment>
<comment type="subcellular location">
    <subcellularLocation>
        <location>Nucleus</location>
    </subcellularLocation>
    <subcellularLocation>
        <location>Nucleus</location>
        <location>PML body</location>
    </subcellularLocation>
    <text>Localizes to the nuclear periphery and in nuclear dots when sumoylated. Some localization in PML nuclear bodies.</text>
</comment>
<comment type="alternative products">
    <event type="alternative splicing"/>
    <event type="alternative initiation"/>
    <isoform>
        <id>Q02447-1</id>
        <name>1</name>
        <name>Large</name>
        <name>L-Sp3</name>
        <sequence type="displayed"/>
    </isoform>
    <isoform>
        <id>Q02447-2</id>
        <name>2</name>
        <sequence type="described" ref="VSP_026701"/>
    </isoform>
    <isoform>
        <id>Q02447-3</id>
        <name>3</name>
        <name>M1-Sp3</name>
        <sequence type="described" ref="VSP_026699"/>
    </isoform>
    <isoform>
        <id>Q02447-4</id>
        <name>4</name>
        <name>M2-Sp3</name>
        <sequence type="described" ref="VSP_026698"/>
    </isoform>
    <isoform>
        <id>Q02447-5</id>
        <name>5</name>
        <sequence type="described" ref="VSP_026700"/>
    </isoform>
    <isoform>
        <id>Q02447-6</id>
        <name>6</name>
        <sequence type="described" ref="VSP_026701 VSP_026702"/>
    </isoform>
</comment>
<comment type="tissue specificity">
    <text>Ubiquitously expressed.</text>
</comment>
<comment type="domain">
    <text evidence="20">The 9aaTAD motif is a transactivation domain present in a large number of yeast and animal transcription factors.</text>
</comment>
<comment type="PTM">
    <text>Not glycosylated.</text>
</comment>
<comment type="PTM">
    <text evidence="5 8 9 13 14 15 18">Acetylated by histone acetyltransferase p300, deacetylated by HDACs. Acetylation/deacetylation states regulate transcriptional activity. Acetylation appears to activate transcription. Alternate sumoylation and acetylation at Lys-551 also control transcriptional activity. Ceramides can also regulate acetylation/deacetylation events through altering the interaction of HDAC with SP3. In vitro, C(18)-ceramides, but not C(16)-ceramides, increase the interaction of HDAC1 with SP3 and enhance the deacetylation of SP3 and the subsequent repression of the TERT promoter.</text>
</comment>
<comment type="PTM">
    <text evidence="5 8 9 13 14 15 18">Sumoylated on all isoforms. Sumoylated on 2 sites in longer isoforms with Lys-551 being the major site. Sumoylation at this site promotes nuclear localization to the nuclear periphery, nuclear dots and PML nuclear bodies. Sumoylation on Lys-551 represses the transactivation activity, except for the largest isoform, L-Sp3, which has little effect on transactivation. Alternate sumoylation and acetylation at Lys-551 also control transcriptional activity.</text>
</comment>
<comment type="miscellaneous">
    <molecule>Isoform 2</molecule>
    <text evidence="25">Produced by alternative initiation at Met-13 of isoform 1.</text>
</comment>
<comment type="miscellaneous">
    <molecule>Isoform 3</molecule>
    <text evidence="25">Produced by alternative initiation at Met-286 of isoform 1.</text>
</comment>
<comment type="miscellaneous">
    <molecule>Isoform 4</molecule>
    <text evidence="25">Produced by alternative initiation at Met-303 of isoform 1.</text>
</comment>
<comment type="miscellaneous">
    <molecule>Isoform 5</molecule>
    <text evidence="25">Produced by alternative splicing. An AUA codon is translated into Met and used as a translation initiation site (in vitro).</text>
</comment>
<comment type="miscellaneous">
    <molecule>Isoform 6</molecule>
    <text evidence="25">Produced by alternative splicing.</text>
</comment>
<comment type="similarity">
    <text evidence="25">Belongs to the Sp1 C2H2-type zinc-finger protein family.</text>
</comment>
<organism>
    <name type="scientific">Homo sapiens</name>
    <name type="common">Human</name>
    <dbReference type="NCBI Taxonomy" id="9606"/>
    <lineage>
        <taxon>Eukaryota</taxon>
        <taxon>Metazoa</taxon>
        <taxon>Chordata</taxon>
        <taxon>Craniata</taxon>
        <taxon>Vertebrata</taxon>
        <taxon>Euteleostomi</taxon>
        <taxon>Mammalia</taxon>
        <taxon>Eutheria</taxon>
        <taxon>Euarchontoglires</taxon>
        <taxon>Primates</taxon>
        <taxon>Haplorrhini</taxon>
        <taxon>Catarrhini</taxon>
        <taxon>Hominidae</taxon>
        <taxon>Homo</taxon>
    </lineage>
</organism>
<reference key="1">
    <citation type="journal article" date="2002" name="J. Biochem. Mol. Biol.">
        <title>AUA as a translation initiation site in vitro for the human transcription factor Sp3.</title>
        <authorList>
            <person name="Hernandez E.M."/>
            <person name="Johnson A."/>
            <person name="Notario V."/>
            <person name="Chen A."/>
            <person name="Richert J.R."/>
        </authorList>
    </citation>
    <scope>NUCLEOTIDE SEQUENCE [MRNA] (ISOFORM 5)</scope>
    <scope>VARIANT ALA-164</scope>
</reference>
<reference key="2">
    <citation type="journal article" date="2004" name="Gene">
        <title>Human transcription factor Sp3: genomic structure, identification of a processed pseudogene, and transcript analysis.</title>
        <authorList>
            <person name="Moran K.M."/>
            <person name="Crusio R.H."/>
            <person name="Chan C.H."/>
            <person name="Grekova M.C."/>
            <person name="Richert J.R."/>
        </authorList>
    </citation>
    <scope>NUCLEOTIDE SEQUENCE [MRNA] (ISOFORMS 1 AND 6)</scope>
    <scope>ALTERNATIVE INITIATION (ISOFORMS 2; 3 AND 4)</scope>
    <scope>VARIANT ALA-164</scope>
</reference>
<reference key="3">
    <citation type="journal article" date="2004" name="Nat. Genet.">
        <title>Complete sequencing and characterization of 21,243 full-length human cDNAs.</title>
        <authorList>
            <person name="Ota T."/>
            <person name="Suzuki Y."/>
            <person name="Nishikawa T."/>
            <person name="Otsuki T."/>
            <person name="Sugiyama T."/>
            <person name="Irie R."/>
            <person name="Wakamatsu A."/>
            <person name="Hayashi K."/>
            <person name="Sato H."/>
            <person name="Nagai K."/>
            <person name="Kimura K."/>
            <person name="Makita H."/>
            <person name="Sekine M."/>
            <person name="Obayashi M."/>
            <person name="Nishi T."/>
            <person name="Shibahara T."/>
            <person name="Tanaka T."/>
            <person name="Ishii S."/>
            <person name="Yamamoto J."/>
            <person name="Saito K."/>
            <person name="Kawai Y."/>
            <person name="Isono Y."/>
            <person name="Nakamura Y."/>
            <person name="Nagahari K."/>
            <person name="Murakami K."/>
            <person name="Yasuda T."/>
            <person name="Iwayanagi T."/>
            <person name="Wagatsuma M."/>
            <person name="Shiratori A."/>
            <person name="Sudo H."/>
            <person name="Hosoiri T."/>
            <person name="Kaku Y."/>
            <person name="Kodaira H."/>
            <person name="Kondo H."/>
            <person name="Sugawara M."/>
            <person name="Takahashi M."/>
            <person name="Kanda K."/>
            <person name="Yokoi T."/>
            <person name="Furuya T."/>
            <person name="Kikkawa E."/>
            <person name="Omura Y."/>
            <person name="Abe K."/>
            <person name="Kamihara K."/>
            <person name="Katsuta N."/>
            <person name="Sato K."/>
            <person name="Tanikawa M."/>
            <person name="Yamazaki M."/>
            <person name="Ninomiya K."/>
            <person name="Ishibashi T."/>
            <person name="Yamashita H."/>
            <person name="Murakawa K."/>
            <person name="Fujimori K."/>
            <person name="Tanai H."/>
            <person name="Kimata M."/>
            <person name="Watanabe M."/>
            <person name="Hiraoka S."/>
            <person name="Chiba Y."/>
            <person name="Ishida S."/>
            <person name="Ono Y."/>
            <person name="Takiguchi S."/>
            <person name="Watanabe S."/>
            <person name="Yosida M."/>
            <person name="Hotuta T."/>
            <person name="Kusano J."/>
            <person name="Kanehori K."/>
            <person name="Takahashi-Fujii A."/>
            <person name="Hara H."/>
            <person name="Tanase T.-O."/>
            <person name="Nomura Y."/>
            <person name="Togiya S."/>
            <person name="Komai F."/>
            <person name="Hara R."/>
            <person name="Takeuchi K."/>
            <person name="Arita M."/>
            <person name="Imose N."/>
            <person name="Musashino K."/>
            <person name="Yuuki H."/>
            <person name="Oshima A."/>
            <person name="Sasaki N."/>
            <person name="Aotsuka S."/>
            <person name="Yoshikawa Y."/>
            <person name="Matsunawa H."/>
            <person name="Ichihara T."/>
            <person name="Shiohata N."/>
            <person name="Sano S."/>
            <person name="Moriya S."/>
            <person name="Momiyama H."/>
            <person name="Satoh N."/>
            <person name="Takami S."/>
            <person name="Terashima Y."/>
            <person name="Suzuki O."/>
            <person name="Nakagawa S."/>
            <person name="Senoh A."/>
            <person name="Mizoguchi H."/>
            <person name="Goto Y."/>
            <person name="Shimizu F."/>
            <person name="Wakebe H."/>
            <person name="Hishigaki H."/>
            <person name="Watanabe T."/>
            <person name="Sugiyama A."/>
            <person name="Takemoto M."/>
            <person name="Kawakami B."/>
            <person name="Yamazaki M."/>
            <person name="Watanabe K."/>
            <person name="Kumagai A."/>
            <person name="Itakura S."/>
            <person name="Fukuzumi Y."/>
            <person name="Fujimori Y."/>
            <person name="Komiyama M."/>
            <person name="Tashiro H."/>
            <person name="Tanigami A."/>
            <person name="Fujiwara T."/>
            <person name="Ono T."/>
            <person name="Yamada K."/>
            <person name="Fujii Y."/>
            <person name="Ozaki K."/>
            <person name="Hirao M."/>
            <person name="Ohmori Y."/>
            <person name="Kawabata A."/>
            <person name="Hikiji T."/>
            <person name="Kobatake N."/>
            <person name="Inagaki H."/>
            <person name="Ikema Y."/>
            <person name="Okamoto S."/>
            <person name="Okitani R."/>
            <person name="Kawakami T."/>
            <person name="Noguchi S."/>
            <person name="Itoh T."/>
            <person name="Shigeta K."/>
            <person name="Senba T."/>
            <person name="Matsumura K."/>
            <person name="Nakajima Y."/>
            <person name="Mizuno T."/>
            <person name="Morinaga M."/>
            <person name="Sasaki M."/>
            <person name="Togashi T."/>
            <person name="Oyama M."/>
            <person name="Hata H."/>
            <person name="Watanabe M."/>
            <person name="Komatsu T."/>
            <person name="Mizushima-Sugano J."/>
            <person name="Satoh T."/>
            <person name="Shirai Y."/>
            <person name="Takahashi Y."/>
            <person name="Nakagawa K."/>
            <person name="Okumura K."/>
            <person name="Nagase T."/>
            <person name="Nomura N."/>
            <person name="Kikuchi H."/>
            <person name="Masuho Y."/>
            <person name="Yamashita R."/>
            <person name="Nakai K."/>
            <person name="Yada T."/>
            <person name="Nakamura Y."/>
            <person name="Ohara O."/>
            <person name="Isogai T."/>
            <person name="Sugano S."/>
        </authorList>
    </citation>
    <scope>NUCLEOTIDE SEQUENCE [LARGE SCALE MRNA] (ISOFORM 1)</scope>
    <source>
        <tissue>Trachea</tissue>
    </source>
</reference>
<reference key="4">
    <citation type="journal article" date="2004" name="Genome Res.">
        <title>The status, quality, and expansion of the NIH full-length cDNA project: the Mammalian Gene Collection (MGC).</title>
        <authorList>
            <consortium name="The MGC Project Team"/>
        </authorList>
    </citation>
    <scope>NUCLEOTIDE SEQUENCE [LARGE SCALE MRNA] (ISOFORM 2)</scope>
    <source>
        <tissue>Lung</tissue>
    </source>
</reference>
<reference key="5">
    <citation type="journal article" date="2002" name="Mol. Biol. Evol.">
        <title>5' genomic structure of human Sp3.</title>
        <authorList>
            <person name="Oleksiak M.F."/>
            <person name="Crawford D.L."/>
        </authorList>
    </citation>
    <scope>NUCLEOTIDE SEQUENCE [GENOMIC DNA] OF 1-135</scope>
</reference>
<reference key="6">
    <citation type="submission" date="2001-03" db="EMBL/GenBank/DDBJ databases">
        <title>Regulation of hTERT-gene transcription by SP3.</title>
        <authorList>
            <person name="Meyer-Grahle U."/>
        </authorList>
    </citation>
    <scope>NUCLEOTIDE SEQUENCE [MRNA] OF 13-112</scope>
</reference>
<reference key="7">
    <citation type="submission" date="2001-03" db="EMBL/GenBank/DDBJ databases">
        <authorList>
            <person name="Kingsley C."/>
            <person name="Winoto A."/>
        </authorList>
    </citation>
    <scope>NUCLEOTIDE SEQUENCE [MRNA] OF 71-781</scope>
    <scope>SEQUENCE REVISION</scope>
    <source>
        <tissue>T-cell</tissue>
    </source>
</reference>
<reference key="8">
    <citation type="journal article" date="1992" name="Mol. Cell. Biol.">
        <title>Cloning of GT box-binding proteins: a novel Sp1 multigene family regulating T-cell receptor gene expression.</title>
        <authorList>
            <person name="Kingsley C."/>
            <person name="Winoto A."/>
        </authorList>
    </citation>
    <scope>NUCLEOTIDE SEQUENCE [MRNA] OF 129-781</scope>
</reference>
<reference key="9">
    <citation type="journal article" date="1992" name="Nucleic Acids Res.">
        <title>Cloning by recognition site screening of two novel GT box binding proteins: a family of Sp1 related genes.</title>
        <authorList>
            <person name="Hagen G."/>
            <person name="Mueller S."/>
            <person name="Beato M."/>
            <person name="Suske G."/>
        </authorList>
    </citation>
    <scope>NUCLEOTIDE SEQUENCE [MRNA] OF 85-781</scope>
    <scope>VARIANT ALA-164</scope>
    <source>
        <tissue>Uterus</tissue>
    </source>
</reference>
<reference key="10">
    <citation type="journal article" date="1997" name="Nucleic Acids Res.">
        <title>Sp3 is a transcriptional activator of the human alpha2(I) collagen gene.</title>
        <authorList>
            <person name="Ihn H."/>
            <person name="Trojanowska M."/>
        </authorList>
    </citation>
    <scope>FUNCTION</scope>
</reference>
<reference key="11">
    <citation type="journal article" date="1999" name="J. Biol. Chem.">
        <title>Functional interactions between Sp1 or Sp3 and the helicase-like transcription factor mediate basal expression from the human plasminogen activator inhibitor-1 gene.</title>
        <authorList>
            <person name="Ding H."/>
            <person name="Benotmane A.M."/>
            <person name="Suske G."/>
            <person name="Collen D."/>
            <person name="Belayew A."/>
        </authorList>
    </citation>
    <scope>FUNCTION</scope>
    <scope>INTERACTION WITH HLTF</scope>
</reference>
<reference key="12">
    <citation type="journal article" date="2001" name="Nucleic Acids Res.">
        <title>Transcription factor Sp3 is regulated by acetylation.</title>
        <authorList>
            <person name="Braun H."/>
            <person name="Koop R."/>
            <person name="Ertmer A."/>
            <person name="Nacht S."/>
            <person name="Suske G."/>
        </authorList>
    </citation>
    <scope>ACETYLATION AT LYS-551</scope>
    <scope>FUNCTION</scope>
    <scope>MUTAGENESIS OF 551-LYS--GLU-557</scope>
</reference>
<reference key="13">
    <citation type="journal article" date="2002" name="J. Biol. Chem.">
        <title>The transcriptional repressor Sp3 is associated with CK2-phosphorylated histone deacetylase 2.</title>
        <authorList>
            <person name="Sun J.M."/>
            <person name="Chen H.Y."/>
            <person name="Moniwa M."/>
            <person name="Litchfield D.W."/>
            <person name="Seto E."/>
            <person name="Davie J.R."/>
        </authorList>
    </citation>
    <scope>INTERACTION WITH HDAC1 AND HDAC2</scope>
</reference>
<reference key="14">
    <citation type="journal article" date="2002" name="Mol. Cell">
        <title>SUMO-1 modification represses Sp3 transcriptional activation and modulates its subnuclear localization.</title>
        <authorList>
            <person name="Ross S."/>
            <person name="Best J.L."/>
            <person name="Zon L.I."/>
            <person name="Gill G."/>
        </authorList>
    </citation>
    <scope>SUMOYLATION AT LYS-120 AND LYS-551</scope>
    <scope>SUBCELLULAR LOCATION</scope>
    <scope>FUNCTION</scope>
    <scope>MUTAGENESIS OF LYS-120 AND LYS-551</scope>
</reference>
<reference key="15">
    <citation type="journal article" date="2003" name="J. Biol. Chem.">
        <title>Acetylated SP3 is a transcriptional activator.</title>
        <authorList>
            <person name="Ammanamanchi S."/>
            <person name="Freeman J.W."/>
            <person name="Brattain M.G."/>
        </authorList>
    </citation>
    <scope>INTERACTION WITH HDAC1 AND EP300</scope>
    <scope>ACETYLATION</scope>
    <scope>FUNCTION</scope>
</reference>
<reference key="16">
    <citation type="journal article" date="2004" name="J. Biol. Chem.">
        <title>Complexity of translationally controlled transcription factor Sp3 isoform expression.</title>
        <authorList>
            <person name="Sapetschnig A."/>
            <person name="Koch F."/>
            <person name="Rischitor G."/>
            <person name="Mennenga T."/>
            <person name="Suske G."/>
        </authorList>
    </citation>
    <scope>SUMOYLATION</scope>
    <scope>ALTERNATIVE PRODUCTS</scope>
    <scope>LACK OF GLYCOSYLATION</scope>
    <scope>FUNCTION</scope>
</reference>
<reference key="17">
    <citation type="journal article" date="2005" name="Cell. Signal.">
        <title>Sumoylation of internally initiated Sp3 isoforms regulates transcriptional repression via a Trichostatin A-insensitive mechanism.</title>
        <authorList>
            <person name="Spengler M.L."/>
            <person name="Kennett S.B."/>
            <person name="Moorefield K.S."/>
            <person name="Simmons S.O."/>
            <person name="Brattain M.G."/>
            <person name="Horowitz J.M."/>
        </authorList>
    </citation>
    <scope>SUMOYLATION AT LYS-551</scope>
    <scope>FUNCTION</scope>
    <scope>SUBCELLULAR LOCATION</scope>
    <scope>MUTAGENESIS OF 551-LYS--GLU-553</scope>
</reference>
<reference key="18">
    <citation type="journal article" date="2005" name="Biochem. J.">
        <title>Sp3 is involved in the regulation of SOCS3 gene expression.</title>
        <authorList>
            <person name="Ehlting C."/>
            <person name="Haussinger D."/>
            <person name="Bode J.G."/>
        </authorList>
    </citation>
    <scope>ACETYLATION AT LYS-551</scope>
    <scope>FUNCTION</scope>
</reference>
<reference key="19">
    <citation type="journal article" date="2006" name="Gene">
        <title>The modification of Sp3 isoforms by SUMOylation has differential effects on the SRC1A promoter.</title>
        <authorList>
            <person name="Ellis D.J."/>
            <person name="Dehm S.M."/>
            <person name="Bonham K."/>
        </authorList>
    </citation>
    <scope>SUMOYLATION AT LYS-551</scope>
    <scope>FUNCTION OF ISOFORMS</scope>
    <scope>MUTAGENESIS OF LYS-551</scope>
</reference>
<reference key="20">
    <citation type="journal article" date="2007" name="FASEB J.">
        <title>Mechanisms of ceramide-mediated repression of the human telomerase reverse transcriptase promoter via deacetylation of Sp3 by histone deacetylase 1.</title>
        <authorList>
            <person name="Wooten-Blanks L.G."/>
            <person name="Song P."/>
            <person name="Senkal C.E."/>
            <person name="Ogretmen B."/>
        </authorList>
    </citation>
    <scope>FUNCTION</scope>
    <scope>DEACETYLATION</scope>
    <scope>INTERACTION WITH HDAC1</scope>
    <scope>MUTAGENESIS OF LYS-551</scope>
</reference>
<reference key="21">
    <citation type="journal article" date="2008" name="Adv. Enzyme Regul.">
        <title>Nuclear organization and chromatin dynamics -- Sp1, Sp3 and histone deacetylases.</title>
        <authorList>
            <person name="Davie J.R."/>
            <person name="He S."/>
            <person name="Li L."/>
            <person name="Sekhavat A."/>
            <person name="Espino P."/>
            <person name="Drobic B."/>
            <person name="Dunn K.L."/>
            <person name="Sun J.M."/>
            <person name="Chen H.Y."/>
            <person name="Yu J."/>
            <person name="Pritchard S."/>
            <person name="Wang X."/>
        </authorList>
    </citation>
    <scope>FUNCTION</scope>
    <scope>SUBCELLULAR LOCATION</scope>
</reference>
<reference key="22">
    <citation type="journal article" date="2008" name="EMBO Rep.">
        <title>SUMO-modified Sp3 represses transcription by provoking local heterochromatic gene silencing.</title>
        <authorList>
            <person name="Stielow B."/>
            <person name="Sapetschnig A."/>
            <person name="Wink C."/>
            <person name="Kraeger I."/>
            <person name="Suske G."/>
        </authorList>
    </citation>
    <scope>SUMOYLATION AT LYS-551</scope>
    <scope>FUNCTION OF ISOFORMS</scope>
</reference>
<reference key="23">
    <citation type="journal article" date="2008" name="Proc. Natl. Acad. Sci. U.S.A.">
        <title>A quantitative atlas of mitotic phosphorylation.</title>
        <authorList>
            <person name="Dephoure N."/>
            <person name="Zhou C."/>
            <person name="Villen J."/>
            <person name="Beausoleil S.A."/>
            <person name="Bakalarski C.E."/>
            <person name="Elledge S.J."/>
            <person name="Gygi S.P."/>
        </authorList>
    </citation>
    <scope>PHOSPHORYLATION [LARGE SCALE ANALYSIS] AT SER-73; SER-563 AND SER-646</scope>
    <scope>IDENTIFICATION BY MASS SPECTROMETRY [LARGE SCALE ANALYSIS]</scope>
    <source>
        <tissue>Cervix carcinoma</tissue>
    </source>
</reference>
<reference key="24">
    <citation type="journal article" date="2009" name="Sci. Signal.">
        <title>Quantitative phosphoproteomic analysis of T cell receptor signaling reveals system-wide modulation of protein-protein interactions.</title>
        <authorList>
            <person name="Mayya V."/>
            <person name="Lundgren D.H."/>
            <person name="Hwang S.-I."/>
            <person name="Rezaul K."/>
            <person name="Wu L."/>
            <person name="Eng J.K."/>
            <person name="Rodionov V."/>
            <person name="Han D.K."/>
        </authorList>
    </citation>
    <scope>PHOSPHORYLATION [LARGE SCALE ANALYSIS] AT SER-73</scope>
    <scope>IDENTIFICATION BY MASS SPECTROMETRY [LARGE SCALE ANALYSIS]</scope>
    <source>
        <tissue>Leukemic T-cell</tissue>
    </source>
</reference>
<reference key="25">
    <citation type="journal article" date="2010" name="Sci. Signal.">
        <title>Quantitative phosphoproteomics reveals widespread full phosphorylation site occupancy during mitosis.</title>
        <authorList>
            <person name="Olsen J.V."/>
            <person name="Vermeulen M."/>
            <person name="Santamaria A."/>
            <person name="Kumar C."/>
            <person name="Miller M.L."/>
            <person name="Jensen L.J."/>
            <person name="Gnad F."/>
            <person name="Cox J."/>
            <person name="Jensen T.S."/>
            <person name="Nigg E.A."/>
            <person name="Brunak S."/>
            <person name="Mann M."/>
        </authorList>
    </citation>
    <scope>PHOSPHORYLATION [LARGE SCALE ANALYSIS] AT SER-73</scope>
    <scope>IDENTIFICATION BY MASS SPECTROMETRY [LARGE SCALE ANALYSIS]</scope>
    <source>
        <tissue>Cervix carcinoma</tissue>
    </source>
</reference>
<reference key="26">
    <citation type="journal article" date="2011" name="Mol. Cell. Biol.">
        <title>Cooperative transcriptional activation by Klf4, Meis2, and Pbx1.</title>
        <authorList>
            <person name="Bjerke G.A."/>
            <person name="Hyman-Walsh C."/>
            <person name="Wotton D."/>
        </authorList>
    </citation>
    <scope>INTERACTION WITH MEIS2 AND PBX1</scope>
</reference>
<reference key="27">
    <citation type="journal article" date="2011" name="Sci. Signal.">
        <title>System-wide temporal characterization of the proteome and phosphoproteome of human embryonic stem cell differentiation.</title>
        <authorList>
            <person name="Rigbolt K.T."/>
            <person name="Prokhorova T.A."/>
            <person name="Akimov V."/>
            <person name="Henningsen J."/>
            <person name="Johansen P.T."/>
            <person name="Kratchmarova I."/>
            <person name="Kassem M."/>
            <person name="Mann M."/>
            <person name="Olsen J.V."/>
            <person name="Blagoev B."/>
        </authorList>
    </citation>
    <scope>IDENTIFICATION BY MASS SPECTROMETRY [LARGE SCALE ANALYSIS]</scope>
</reference>
<reference key="28">
    <citation type="journal article" date="2013" name="J. Proteome Res.">
        <title>Toward a comprehensive characterization of a human cancer cell phosphoproteome.</title>
        <authorList>
            <person name="Zhou H."/>
            <person name="Di Palma S."/>
            <person name="Preisinger C."/>
            <person name="Peng M."/>
            <person name="Polat A.N."/>
            <person name="Heck A.J."/>
            <person name="Mohammed S."/>
        </authorList>
    </citation>
    <scope>PHOSPHORYLATION [LARGE SCALE ANALYSIS] AT SER-73</scope>
    <scope>IDENTIFICATION BY MASS SPECTROMETRY [LARGE SCALE ANALYSIS]</scope>
    <source>
        <tissue>Erythroleukemia</tissue>
    </source>
</reference>
<reference key="29">
    <citation type="journal article" date="2014" name="J. Proteomics">
        <title>An enzyme assisted RP-RPLC approach for in-depth analysis of human liver phosphoproteome.</title>
        <authorList>
            <person name="Bian Y."/>
            <person name="Song C."/>
            <person name="Cheng K."/>
            <person name="Dong M."/>
            <person name="Wang F."/>
            <person name="Huang J."/>
            <person name="Sun D."/>
            <person name="Wang L."/>
            <person name="Ye M."/>
            <person name="Zou H."/>
        </authorList>
    </citation>
    <scope>PHOSPHORYLATION [LARGE SCALE ANALYSIS] AT SER-73</scope>
    <scope>IDENTIFICATION BY MASS SPECTROMETRY [LARGE SCALE ANALYSIS]</scope>
    <source>
        <tissue>Liver</tissue>
    </source>
</reference>
<reference key="30">
    <citation type="journal article" date="2014" name="Nat. Struct. Mol. Biol.">
        <title>Uncovering global SUMOylation signaling networks in a site-specific manner.</title>
        <authorList>
            <person name="Hendriks I.A."/>
            <person name="D'Souza R.C."/>
            <person name="Yang B."/>
            <person name="Verlaan-de Vries M."/>
            <person name="Mann M."/>
            <person name="Vertegaal A.C."/>
        </authorList>
    </citation>
    <scope>SUMOYLATION [LARGE SCALE ANALYSIS] AT LYS-551</scope>
    <scope>IDENTIFICATION BY MASS SPECTROMETRY [LARGE SCALE ANALYSIS]</scope>
</reference>
<reference key="31">
    <citation type="journal article" date="2014" name="Proc. Natl. Acad. Sci. U.S.A.">
        <title>Mapping of SUMO sites and analysis of SUMOylation changes induced by external stimuli.</title>
        <authorList>
            <person name="Impens F."/>
            <person name="Radoshevich L."/>
            <person name="Cossart P."/>
            <person name="Ribet D."/>
        </authorList>
    </citation>
    <scope>SUMOYLATION [LARGE SCALE ANALYSIS] AT LYS-551</scope>
    <scope>IDENTIFICATION BY MASS SPECTROMETRY [LARGE SCALE ANALYSIS]</scope>
</reference>
<reference key="32">
    <citation type="journal article" date="2015" name="Cell Rep.">
        <title>SUMO-2 orchestrates chromatin modifiers in response to DNA damage.</title>
        <authorList>
            <person name="Hendriks I.A."/>
            <person name="Treffers L.W."/>
            <person name="Verlaan-de Vries M."/>
            <person name="Olsen J.V."/>
            <person name="Vertegaal A.C."/>
        </authorList>
    </citation>
    <scope>SUMOYLATION [LARGE SCALE ANALYSIS] AT LYS-551</scope>
    <scope>IDENTIFICATION BY MASS SPECTROMETRY [LARGE SCALE ANALYSIS]</scope>
</reference>
<reference key="33">
    <citation type="journal article" date="2015" name="Mol. Cell. Proteomics">
        <title>System-wide analysis of SUMOylation dynamics in response to replication stress reveals novel small ubiquitin-like modified target proteins and acceptor lysines relevant for genome stability.</title>
        <authorList>
            <person name="Xiao Z."/>
            <person name="Chang J.G."/>
            <person name="Hendriks I.A."/>
            <person name="Sigurdsson J.O."/>
            <person name="Olsen J.V."/>
            <person name="Vertegaal A.C."/>
        </authorList>
    </citation>
    <scope>SUMOYLATION [LARGE SCALE ANALYSIS] AT LYS-551</scope>
    <scope>IDENTIFICATION BY MASS SPECTROMETRY [LARGE SCALE ANALYSIS]</scope>
</reference>
<reference key="34">
    <citation type="journal article" date="2017" name="Nat. Struct. Mol. Biol.">
        <title>Site-specific mapping of the human SUMO proteome reveals co-modification with phosphorylation.</title>
        <authorList>
            <person name="Hendriks I.A."/>
            <person name="Lyon D."/>
            <person name="Young C."/>
            <person name="Jensen L.J."/>
            <person name="Vertegaal A.C."/>
            <person name="Nielsen M.L."/>
        </authorList>
    </citation>
    <scope>SUMOYLATION [LARGE SCALE ANALYSIS] AT LYS-551 AND LYS-593</scope>
    <scope>IDENTIFICATION BY MASS SPECTROMETRY [LARGE SCALE ANALYSIS]</scope>
</reference>
<reference key="35">
    <citation type="journal article" date="2020" name="Cell. Mol. Life Sci.">
        <title>The evolution of the 9aaTAD domain in Sp2 proteins: inactivation with valines and intron reservoirs.</title>
        <authorList>
            <person name="Piskacek M."/>
            <person name="Havelka M."/>
            <person name="Jendruchova K."/>
            <person name="Knight A."/>
            <person name="Keegan L.P."/>
        </authorList>
    </citation>
    <scope>9AATAD MOTIF</scope>
</reference>
<name>SP3_HUMAN</name>
<accession>Q02447</accession>
<accession>A0AVL9</accession>
<accession>B4E2B7</accession>
<accession>Q69B26</accession>
<accession>Q69B27</accession>
<accession>Q8TD56</accession>
<accession>Q8WWU4</accession>
<accession>Q9BQR1</accession>
<proteinExistence type="evidence at protein level"/>
<sequence>MTAPEKPVKQEEMAALDVDSGGGGGGGGGHGEYLQQQQQHGNGAVAAAAAAQDTQPSPLALLAATCSKIGPPSPGDDEEEAAAAAGAPAAAGATGDLASAQLGGAPNRWEVLSATPTTIKDEAGNLVQIPSAATSSGQYVLPLQNLQNQQIFSVAPGSDSSNGTVSSVQYQVIPQIQSADGQQVQIGFTGSSDNGGINQESSQIQIIPGSNQTLLASGTPSANIQNLIPQTGQVQVQGVAIGGSSFPGQTQVVANVPLGLPGNITFVPINSVDLDSLGLSGSSQTMTAGINADGHLINTGQAMDSSDNSERTGERVSPDINETNTDTDLFVPTSSSSQLPVTIDSTGILQQNTNSLTTSSGQVHSSDLQGNYIQSPVSEETQAQNIQVSTAQPVVQHLQLQESQQPTSQAQIVQGITPQTIHGVQASGQNISQQALQNLQLQLNPGTFLIQAQTVTPSGQVTWQTFQVQGVQNLQNLQIQNTAAQQITLTPVQTLTLGQVAAGGAFTSTPVSLSTGQLPNLQTVTVNSIDSAGIQLHPGENADSPADIRIKEEEPDPEEWQLSGDSTLNTNDLTHLRVQVVDEEGDQQHQEGKRLRRVACTCPNCKEGGGRGTNLGKKKQHICHIPGCGKVYGKTSHLRAHLRWHSGERPFVCNWMYCGKRFTRSDELQRHRRTHTGEKKFVCPECSKRFMRSDHLAKHIKTHQNKKGIHSSSTVLASVEAARDDTLITAGGTTLILANIQQGSVSGIGTVNTSATSNQDILTNTEIPLQLVTVSGNETME</sequence>
<evidence type="ECO:0000250" key="1">
    <source>
        <dbReference type="UniProtKB" id="O70494"/>
    </source>
</evidence>
<evidence type="ECO:0000255" key="2">
    <source>
        <dbReference type="PROSITE-ProRule" id="PRU00042"/>
    </source>
</evidence>
<evidence type="ECO:0000256" key="3">
    <source>
        <dbReference type="SAM" id="MobiDB-lite"/>
    </source>
</evidence>
<evidence type="ECO:0000269" key="4">
    <source>
    </source>
</evidence>
<evidence type="ECO:0000269" key="5">
    <source>
    </source>
</evidence>
<evidence type="ECO:0000269" key="6">
    <source>
    </source>
</evidence>
<evidence type="ECO:0000269" key="7">
    <source>
    </source>
</evidence>
<evidence type="ECO:0000269" key="8">
    <source>
    </source>
</evidence>
<evidence type="ECO:0000269" key="9">
    <source>
    </source>
</evidence>
<evidence type="ECO:0000269" key="10">
    <source>
    </source>
</evidence>
<evidence type="ECO:0000269" key="11">
    <source>
    </source>
</evidence>
<evidence type="ECO:0000269" key="12">
    <source>
    </source>
</evidence>
<evidence type="ECO:0000269" key="13">
    <source>
    </source>
</evidence>
<evidence type="ECO:0000269" key="14">
    <source>
    </source>
</evidence>
<evidence type="ECO:0000269" key="15">
    <source>
    </source>
</evidence>
<evidence type="ECO:0000269" key="16">
    <source>
    </source>
</evidence>
<evidence type="ECO:0000269" key="17">
    <source>
    </source>
</evidence>
<evidence type="ECO:0000269" key="18">
    <source>
    </source>
</evidence>
<evidence type="ECO:0000269" key="19">
    <source>
    </source>
</evidence>
<evidence type="ECO:0000269" key="20">
    <source>
    </source>
</evidence>
<evidence type="ECO:0000269" key="21">
    <source>
    </source>
</evidence>
<evidence type="ECO:0000303" key="22">
    <source>
    </source>
</evidence>
<evidence type="ECO:0000303" key="23">
    <source>
    </source>
</evidence>
<evidence type="ECO:0000303" key="24">
    <source>
    </source>
</evidence>
<evidence type="ECO:0000305" key="25"/>
<evidence type="ECO:0007744" key="26">
    <source>
    </source>
</evidence>
<evidence type="ECO:0007744" key="27">
    <source>
    </source>
</evidence>
<evidence type="ECO:0007744" key="28">
    <source>
    </source>
</evidence>
<evidence type="ECO:0007744" key="29">
    <source>
    </source>
</evidence>
<evidence type="ECO:0007744" key="30">
    <source>
    </source>
</evidence>
<evidence type="ECO:0007744" key="31">
    <source>
    </source>
</evidence>
<evidence type="ECO:0007744" key="32">
    <source>
    </source>
</evidence>
<evidence type="ECO:0007744" key="33">
    <source>
    </source>
</evidence>
<evidence type="ECO:0007744" key="34">
    <source>
    </source>
</evidence>
<evidence type="ECO:0007744" key="35">
    <source>
    </source>
</evidence>
<feature type="chain" id="PRO_0000047141" description="Transcription factor Sp3">
    <location>
        <begin position="1"/>
        <end position="781"/>
    </location>
</feature>
<feature type="zinc finger region" description="C2H2-type 1" evidence="2">
    <location>
        <begin position="621"/>
        <end position="645"/>
    </location>
</feature>
<feature type="zinc finger region" description="C2H2-type 2" evidence="2">
    <location>
        <begin position="651"/>
        <end position="675"/>
    </location>
</feature>
<feature type="zinc finger region" description="C2H2-type 3" evidence="2">
    <location>
        <begin position="681"/>
        <end position="703"/>
    </location>
</feature>
<feature type="region of interest" description="Disordered" evidence="3">
    <location>
        <begin position="1"/>
        <end position="53"/>
    </location>
</feature>
<feature type="region of interest" description="Disordered" evidence="3">
    <location>
        <begin position="65"/>
        <end position="88"/>
    </location>
</feature>
<feature type="region of interest" description="Transactivation domain (Gln-rich)">
    <location>
        <begin position="138"/>
        <end position="237"/>
    </location>
</feature>
<feature type="region of interest" description="Disordered" evidence="3">
    <location>
        <begin position="301"/>
        <end position="338"/>
    </location>
</feature>
<feature type="region of interest" description="Transactivation domain (Gln-rich)">
    <location>
        <begin position="350"/>
        <end position="499"/>
    </location>
</feature>
<feature type="region of interest" description="Repressor domain">
    <location>
        <begin position="534"/>
        <end position="620"/>
    </location>
</feature>
<feature type="short sequence motif" description="9aaTAD" evidence="20">
    <location>
        <begin position="461"/>
        <end position="469"/>
    </location>
</feature>
<feature type="compositionally biased region" description="Basic and acidic residues" evidence="3">
    <location>
        <begin position="1"/>
        <end position="12"/>
    </location>
</feature>
<feature type="compositionally biased region" description="Gly residues" evidence="3">
    <location>
        <begin position="20"/>
        <end position="31"/>
    </location>
</feature>
<feature type="compositionally biased region" description="Low complexity" evidence="3">
    <location>
        <begin position="32"/>
        <end position="53"/>
    </location>
</feature>
<feature type="compositionally biased region" description="Basic and acidic residues" evidence="3">
    <location>
        <begin position="308"/>
        <end position="317"/>
    </location>
</feature>
<feature type="compositionally biased region" description="Polar residues" evidence="3">
    <location>
        <begin position="320"/>
        <end position="338"/>
    </location>
</feature>
<feature type="modified residue" description="Phosphoserine" evidence="26 27 28 29 30">
    <location>
        <position position="73"/>
    </location>
</feature>
<feature type="modified residue" description="N6-acetyllysine; alternate" evidence="5 14">
    <location>
        <position position="551"/>
    </location>
</feature>
<feature type="modified residue" description="Phosphoserine" evidence="26">
    <location>
        <position position="563"/>
    </location>
</feature>
<feature type="modified residue" description="Phosphoserine" evidence="1">
    <location>
        <position position="566"/>
    </location>
</feature>
<feature type="modified residue" description="Phosphoserine" evidence="26">
    <location>
        <position position="646"/>
    </location>
</feature>
<feature type="cross-link" description="Glycyl lysine isopeptide (Lys-Gly) (interchain with G-Cter in SUMO)" evidence="8">
    <location>
        <position position="120"/>
    </location>
</feature>
<feature type="cross-link" description="Glycyl lysine isopeptide (Lys-Gly) (interchain with G-Cter in SUMO); alternate">
    <location>
        <position position="551"/>
    </location>
</feature>
<feature type="cross-link" description="Glycyl lysine isopeptide (Lys-Gly) (interchain with G-Cter in SUMO1); alternate" evidence="31">
    <location>
        <position position="551"/>
    </location>
</feature>
<feature type="cross-link" description="Glycyl lysine isopeptide (Lys-Gly) (interchain with G-Cter in SUMO2); alternate" evidence="32 33 34 35">
    <location>
        <position position="551"/>
    </location>
</feature>
<feature type="cross-link" description="Glycyl lysine isopeptide (Lys-Gly) (interchain with G-Cter in SUMO2)" evidence="35">
    <location>
        <position position="593"/>
    </location>
</feature>
<feature type="splice variant" id="VSP_026698" description="In isoform 4." evidence="25">
    <location>
        <begin position="1"/>
        <end position="302"/>
    </location>
</feature>
<feature type="splice variant" id="VSP_026699" description="In isoform 3." evidence="25">
    <location>
        <begin position="1"/>
        <end position="285"/>
    </location>
</feature>
<feature type="splice variant" id="VSP_026700" description="In isoform 5." evidence="22">
    <original>MTAPEKPVKQEEMAALDVDSGGGGGGGGGHGEYLQQQQQHGNGAVAAAAAAQDTQPSPLALLAATCSKI</original>
    <variation>M</variation>
    <location>
        <begin position="1"/>
        <end position="69"/>
    </location>
</feature>
<feature type="splice variant" id="VSP_026701" description="In isoform 2 and isoform 6." evidence="23 24">
    <location>
        <begin position="1"/>
        <end position="12"/>
    </location>
</feature>
<feature type="splice variant" id="VSP_026702" description="In isoform 6." evidence="23">
    <location>
        <begin position="53"/>
        <end position="93"/>
    </location>
</feature>
<feature type="sequence variant" id="VAR_016123" description="In dbSNP:rs1047640." evidence="7 10 12">
    <original>T</original>
    <variation>A</variation>
    <location>
        <position position="164"/>
    </location>
</feature>
<feature type="mutagenesis site" description="Some loss of sumoylation. Slight increase in transcriptional activity. Large increase in transcriptional activity; when associated with R-551." evidence="8">
    <original>K</original>
    <variation>R</variation>
    <location>
        <position position="120"/>
    </location>
</feature>
<feature type="mutagenesis site" description="Increases transcriptional activity." evidence="13">
    <original>KEE</original>
    <variation>AAA</variation>
    <location>
        <begin position="551"/>
        <end position="553"/>
    </location>
</feature>
<feature type="mutagenesis site" description="200-fold increase in transcriptional activation." evidence="13">
    <original>KEE</original>
    <variation>REA</variation>
    <location>
        <begin position="551"/>
        <end position="553"/>
    </location>
</feature>
<feature type="mutagenesis site" description="200-fold increase in transcriptional activation." evidence="13">
    <original>KEE</original>
    <variation>RED</variation>
    <location>
        <begin position="551"/>
        <end position="553"/>
    </location>
</feature>
<feature type="mutagenesis site" description="200-fold increase in transcriptional activation.">
    <original>KE</original>
    <variation>RA</variation>
    <location>
        <begin position="551"/>
        <end position="552"/>
    </location>
</feature>
<feature type="mutagenesis site" description="200-fold increase in transcriptional activation.">
    <original>KE</original>
    <variation>RD</variation>
    <location>
        <begin position="551"/>
        <end position="552"/>
    </location>
</feature>
<feature type="mutagenesis site" description="A decreased interaction with HDAC1 and deacetylation of SP3. Increase of about 4.5% of activity of the TERT promoter. Decreased recruitment of HDAC1 and increased binding of RNA polymerase II with promoter DNA." evidence="8 15 16">
    <original>K</original>
    <variation>Q</variation>
    <location>
        <position position="551"/>
    </location>
</feature>
<feature type="mutagenesis site" description="Great loss of sumoylation, 20-fold increase in transcriptional activity and diffuse nuclear localization. Further small increase in transcriptional activity; when associated with R-120. Increased interaction with HDAC1 and deacetylation of SP3. About 50% decrease in activity of the TERT promoter. Enhances recruitment of HDAC1 and inhibits binding of RNA polymerase II with promoter DNA." evidence="8 15 16">
    <original>K</original>
    <variation>R</variation>
    <location>
        <position position="551"/>
    </location>
</feature>
<feature type="sequence conflict" description="In Ref. 2; AAR30505." evidence="25" ref="2">
    <original>I</original>
    <variation>M</variation>
    <location>
        <position position="69"/>
    </location>
</feature>
<feature type="sequence conflict" description="In Ref. 7; AAA36630." evidence="25" ref="7">
    <original>P</original>
    <variation>G</variation>
    <location>
        <position position="71"/>
    </location>
</feature>
<feature type="sequence conflict" description="In Ref. 1; AAL58086, 2; AAR30505/AAR30506 and 8; CAA48562." evidence="25" ref="1 2 8">
    <original>N</original>
    <variation>K</variation>
    <location>
        <position position="739"/>
    </location>
</feature>
<protein>
    <recommendedName>
        <fullName>Transcription factor Sp3</fullName>
    </recommendedName>
    <alternativeName>
        <fullName>SPR-2</fullName>
    </alternativeName>
</protein>
<dbReference type="EMBL" id="AY070137">
    <property type="protein sequence ID" value="AAL58086.1"/>
    <property type="molecule type" value="mRNA"/>
</dbReference>
<dbReference type="EMBL" id="AY441957">
    <property type="protein sequence ID" value="AAR30505.1"/>
    <property type="molecule type" value="mRNA"/>
</dbReference>
<dbReference type="EMBL" id="AY441958">
    <property type="protein sequence ID" value="AAR30506.1"/>
    <property type="molecule type" value="mRNA"/>
</dbReference>
<dbReference type="EMBL" id="AK304199">
    <property type="protein sequence ID" value="BAG65079.1"/>
    <property type="molecule type" value="mRNA"/>
</dbReference>
<dbReference type="EMBL" id="BC126414">
    <property type="protein sequence ID" value="AAI26415.1"/>
    <property type="molecule type" value="mRNA"/>
</dbReference>
<dbReference type="EMBL" id="AF494280">
    <property type="protein sequence ID" value="AAM12875.1"/>
    <property type="molecule type" value="Genomic_DNA"/>
</dbReference>
<dbReference type="EMBL" id="AJ310752">
    <property type="protein sequence ID" value="CAC34575.1"/>
    <property type="molecule type" value="mRNA"/>
</dbReference>
<dbReference type="EMBL" id="M97191">
    <property type="protein sequence ID" value="AAA36630.2"/>
    <property type="molecule type" value="mRNA"/>
</dbReference>
<dbReference type="EMBL" id="X68560">
    <property type="protein sequence ID" value="CAA48562.1"/>
    <property type="molecule type" value="mRNA"/>
</dbReference>
<dbReference type="CCDS" id="CCDS2254.1">
    <molecule id="Q02447-1"/>
</dbReference>
<dbReference type="CCDS" id="CCDS46452.1">
    <molecule id="Q02447-5"/>
</dbReference>
<dbReference type="PIR" id="B44489">
    <property type="entry name" value="B44489"/>
</dbReference>
<dbReference type="RefSeq" id="NP_001017371.3">
    <molecule id="Q02447-5"/>
    <property type="nucleotide sequence ID" value="NM_001017371.5"/>
</dbReference>
<dbReference type="RefSeq" id="NP_001166183.1">
    <property type="nucleotide sequence ID" value="NM_001172712.1"/>
</dbReference>
<dbReference type="RefSeq" id="NP_003102.1">
    <molecule id="Q02447-1"/>
    <property type="nucleotide sequence ID" value="NM_003111.5"/>
</dbReference>
<dbReference type="SMR" id="Q02447"/>
<dbReference type="BioGRID" id="112553">
    <property type="interactions" value="77"/>
</dbReference>
<dbReference type="CORUM" id="Q02447"/>
<dbReference type="ELM" id="Q02447"/>
<dbReference type="FunCoup" id="Q02447">
    <property type="interactions" value="4501"/>
</dbReference>
<dbReference type="IntAct" id="Q02447">
    <property type="interactions" value="30"/>
</dbReference>
<dbReference type="MINT" id="Q02447"/>
<dbReference type="STRING" id="9606.ENSP00000310301"/>
<dbReference type="GlyCosmos" id="Q02447">
    <property type="glycosylation" value="13 sites, 2 glycans"/>
</dbReference>
<dbReference type="GlyGen" id="Q02447">
    <property type="glycosylation" value="14 sites, 2 O-linked glycans (13 sites)"/>
</dbReference>
<dbReference type="iPTMnet" id="Q02447"/>
<dbReference type="PhosphoSitePlus" id="Q02447"/>
<dbReference type="BioMuta" id="SP3"/>
<dbReference type="DMDM" id="30923147"/>
<dbReference type="jPOST" id="Q02447"/>
<dbReference type="MassIVE" id="Q02447"/>
<dbReference type="PaxDb" id="9606-ENSP00000310301"/>
<dbReference type="PeptideAtlas" id="Q02447"/>
<dbReference type="ProteomicsDB" id="58091">
    <molecule id="Q02447-1"/>
</dbReference>
<dbReference type="ProteomicsDB" id="58092">
    <molecule id="Q02447-2"/>
</dbReference>
<dbReference type="ProteomicsDB" id="58093">
    <molecule id="Q02447-3"/>
</dbReference>
<dbReference type="ProteomicsDB" id="58094">
    <molecule id="Q02447-4"/>
</dbReference>
<dbReference type="ProteomicsDB" id="58095">
    <molecule id="Q02447-5"/>
</dbReference>
<dbReference type="ProteomicsDB" id="58096">
    <molecule id="Q02447-6"/>
</dbReference>
<dbReference type="Pumba" id="Q02447"/>
<dbReference type="Antibodypedia" id="3887">
    <property type="antibodies" value="408 antibodies from 33 providers"/>
</dbReference>
<dbReference type="DNASU" id="6670"/>
<dbReference type="Ensembl" id="ENST00000310015.12">
    <molecule id="Q02447-1"/>
    <property type="protein sequence ID" value="ENSP00000310301.6"/>
    <property type="gene ID" value="ENSG00000172845.18"/>
</dbReference>
<dbReference type="Ensembl" id="ENST00000418194.7">
    <molecule id="Q02447-5"/>
    <property type="protein sequence ID" value="ENSP00000406140.3"/>
    <property type="gene ID" value="ENSG00000172845.18"/>
</dbReference>
<dbReference type="GeneID" id="6670"/>
<dbReference type="KEGG" id="hsa:6670"/>
<dbReference type="MANE-Select" id="ENST00000310015.12">
    <property type="protein sequence ID" value="ENSP00000310301.6"/>
    <property type="RefSeq nucleotide sequence ID" value="NM_003111.5"/>
    <property type="RefSeq protein sequence ID" value="NP_003102.1"/>
</dbReference>
<dbReference type="UCSC" id="uc002uig.3">
    <molecule id="Q02447-1"/>
    <property type="organism name" value="human"/>
</dbReference>
<dbReference type="AGR" id="HGNC:11208"/>
<dbReference type="CTD" id="6670"/>
<dbReference type="DisGeNET" id="6670"/>
<dbReference type="GeneCards" id="SP3"/>
<dbReference type="HGNC" id="HGNC:11208">
    <property type="gene designation" value="SP3"/>
</dbReference>
<dbReference type="HPA" id="ENSG00000172845">
    <property type="expression patterns" value="Low tissue specificity"/>
</dbReference>
<dbReference type="MIM" id="601804">
    <property type="type" value="gene"/>
</dbReference>
<dbReference type="neXtProt" id="NX_Q02447"/>
<dbReference type="OpenTargets" id="ENSG00000172845"/>
<dbReference type="PharmGKB" id="PA36045"/>
<dbReference type="VEuPathDB" id="HostDB:ENSG00000172845"/>
<dbReference type="eggNOG" id="KOG1721">
    <property type="taxonomic scope" value="Eukaryota"/>
</dbReference>
<dbReference type="GeneTree" id="ENSGT00940000155099"/>
<dbReference type="InParanoid" id="Q02447"/>
<dbReference type="OMA" id="TCTQVES"/>
<dbReference type="OrthoDB" id="6365676at2759"/>
<dbReference type="PAN-GO" id="Q02447">
    <property type="GO annotations" value="3 GO annotations based on evolutionary models"/>
</dbReference>
<dbReference type="PhylomeDB" id="Q02447"/>
<dbReference type="TreeFam" id="TF350150"/>
<dbReference type="PathwayCommons" id="Q02447"/>
<dbReference type="Reactome" id="R-HSA-3232118">
    <property type="pathway name" value="SUMOylation of transcription factors"/>
</dbReference>
<dbReference type="SignaLink" id="Q02447"/>
<dbReference type="SIGNOR" id="Q02447"/>
<dbReference type="BioGRID-ORCS" id="6670">
    <property type="hits" value="80 hits in 1178 CRISPR screens"/>
</dbReference>
<dbReference type="ChiTaRS" id="SP3">
    <property type="organism name" value="human"/>
</dbReference>
<dbReference type="GeneWiki" id="Sp3_transcription_factor"/>
<dbReference type="GenomeRNAi" id="6670"/>
<dbReference type="Pharos" id="Q02447">
    <property type="development level" value="Tbio"/>
</dbReference>
<dbReference type="PRO" id="PR:Q02447"/>
<dbReference type="Proteomes" id="UP000005640">
    <property type="component" value="Chromosome 2"/>
</dbReference>
<dbReference type="RNAct" id="Q02447">
    <property type="molecule type" value="protein"/>
</dbReference>
<dbReference type="Bgee" id="ENSG00000172845">
    <property type="expression patterns" value="Expressed in hair follicle and 219 other cell types or tissues"/>
</dbReference>
<dbReference type="ExpressionAtlas" id="Q02447">
    <property type="expression patterns" value="baseline and differential"/>
</dbReference>
<dbReference type="GO" id="GO:0000785">
    <property type="term" value="C:chromatin"/>
    <property type="evidence" value="ECO:0000247"/>
    <property type="project" value="NTNU_SB"/>
</dbReference>
<dbReference type="GO" id="GO:0005829">
    <property type="term" value="C:cytosol"/>
    <property type="evidence" value="ECO:0000314"/>
    <property type="project" value="HPA"/>
</dbReference>
<dbReference type="GO" id="GO:0005654">
    <property type="term" value="C:nucleoplasm"/>
    <property type="evidence" value="ECO:0000314"/>
    <property type="project" value="HPA"/>
</dbReference>
<dbReference type="GO" id="GO:0005634">
    <property type="term" value="C:nucleus"/>
    <property type="evidence" value="ECO:0000305"/>
    <property type="project" value="UniProtKB"/>
</dbReference>
<dbReference type="GO" id="GO:0016605">
    <property type="term" value="C:PML body"/>
    <property type="evidence" value="ECO:0007669"/>
    <property type="project" value="UniProtKB-SubCell"/>
</dbReference>
<dbReference type="GO" id="GO:0032993">
    <property type="term" value="C:protein-DNA complex"/>
    <property type="evidence" value="ECO:0000250"/>
    <property type="project" value="ARUK-UCL"/>
</dbReference>
<dbReference type="GO" id="GO:0017053">
    <property type="term" value="C:transcription repressor complex"/>
    <property type="evidence" value="ECO:0007669"/>
    <property type="project" value="Ensembl"/>
</dbReference>
<dbReference type="GO" id="GO:0003682">
    <property type="term" value="F:chromatin binding"/>
    <property type="evidence" value="ECO:0007669"/>
    <property type="project" value="Ensembl"/>
</dbReference>
<dbReference type="GO" id="GO:0000981">
    <property type="term" value="F:DNA-binding transcription factor activity, RNA polymerase II-specific"/>
    <property type="evidence" value="ECO:0000247"/>
    <property type="project" value="NTNU_SB"/>
</dbReference>
<dbReference type="GO" id="GO:0001227">
    <property type="term" value="F:DNA-binding transcription repressor activity, RNA polymerase II-specific"/>
    <property type="evidence" value="ECO:0007669"/>
    <property type="project" value="Ensembl"/>
</dbReference>
<dbReference type="GO" id="GO:0000978">
    <property type="term" value="F:RNA polymerase II cis-regulatory region sequence-specific DNA binding"/>
    <property type="evidence" value="ECO:0000250"/>
    <property type="project" value="ARUK-UCL"/>
</dbReference>
<dbReference type="GO" id="GO:0000977">
    <property type="term" value="F:RNA polymerase II transcription regulatory region sequence-specific DNA binding"/>
    <property type="evidence" value="ECO:0000314"/>
    <property type="project" value="UniProtKB"/>
</dbReference>
<dbReference type="GO" id="GO:0061629">
    <property type="term" value="F:RNA polymerase II-specific DNA-binding transcription factor binding"/>
    <property type="evidence" value="ECO:0000353"/>
    <property type="project" value="UniProtKB"/>
</dbReference>
<dbReference type="GO" id="GO:1990837">
    <property type="term" value="F:sequence-specific double-stranded DNA binding"/>
    <property type="evidence" value="ECO:0000314"/>
    <property type="project" value="ARUK-UCL"/>
</dbReference>
<dbReference type="GO" id="GO:0008270">
    <property type="term" value="F:zinc ion binding"/>
    <property type="evidence" value="ECO:0007669"/>
    <property type="project" value="UniProtKB-KW"/>
</dbReference>
<dbReference type="GO" id="GO:0030183">
    <property type="term" value="P:B cell differentiation"/>
    <property type="evidence" value="ECO:0007669"/>
    <property type="project" value="Ensembl"/>
</dbReference>
<dbReference type="GO" id="GO:0060216">
    <property type="term" value="P:definitive hemopoiesis"/>
    <property type="evidence" value="ECO:0007669"/>
    <property type="project" value="Ensembl"/>
</dbReference>
<dbReference type="GO" id="GO:0048596">
    <property type="term" value="P:embryonic camera-type eye morphogenesis"/>
    <property type="evidence" value="ECO:0007669"/>
    <property type="project" value="Ensembl"/>
</dbReference>
<dbReference type="GO" id="GO:0001892">
    <property type="term" value="P:embryonic placenta development"/>
    <property type="evidence" value="ECO:0007669"/>
    <property type="project" value="Ensembl"/>
</dbReference>
<dbReference type="GO" id="GO:0060136">
    <property type="term" value="P:embryonic process involved in female pregnancy"/>
    <property type="evidence" value="ECO:0007669"/>
    <property type="project" value="Ensembl"/>
</dbReference>
<dbReference type="GO" id="GO:0048706">
    <property type="term" value="P:embryonic skeletal system development"/>
    <property type="evidence" value="ECO:0007669"/>
    <property type="project" value="Ensembl"/>
</dbReference>
<dbReference type="GO" id="GO:0043353">
    <property type="term" value="P:enucleate erythrocyte differentiation"/>
    <property type="evidence" value="ECO:0007669"/>
    <property type="project" value="Ensembl"/>
</dbReference>
<dbReference type="GO" id="GO:0030851">
    <property type="term" value="P:granulocyte differentiation"/>
    <property type="evidence" value="ECO:0007669"/>
    <property type="project" value="Ensembl"/>
</dbReference>
<dbReference type="GO" id="GO:0001889">
    <property type="term" value="P:liver development"/>
    <property type="evidence" value="ECO:0007669"/>
    <property type="project" value="Ensembl"/>
</dbReference>
<dbReference type="GO" id="GO:0030324">
    <property type="term" value="P:lung development"/>
    <property type="evidence" value="ECO:0007669"/>
    <property type="project" value="Ensembl"/>
</dbReference>
<dbReference type="GO" id="GO:0030219">
    <property type="term" value="P:megakaryocyte differentiation"/>
    <property type="evidence" value="ECO:0007669"/>
    <property type="project" value="Ensembl"/>
</dbReference>
<dbReference type="GO" id="GO:0030224">
    <property type="term" value="P:monocyte differentiation"/>
    <property type="evidence" value="ECO:0007669"/>
    <property type="project" value="Ensembl"/>
</dbReference>
<dbReference type="GO" id="GO:0002318">
    <property type="term" value="P:myeloid progenitor cell differentiation"/>
    <property type="evidence" value="ECO:0007669"/>
    <property type="project" value="Ensembl"/>
</dbReference>
<dbReference type="GO" id="GO:0001779">
    <property type="term" value="P:natural killer cell differentiation"/>
    <property type="evidence" value="ECO:0007669"/>
    <property type="project" value="Ensembl"/>
</dbReference>
<dbReference type="GO" id="GO:0045892">
    <property type="term" value="P:negative regulation of DNA-templated transcription"/>
    <property type="evidence" value="ECO:0000315"/>
    <property type="project" value="UniProtKB"/>
</dbReference>
<dbReference type="GO" id="GO:0001503">
    <property type="term" value="P:ossification"/>
    <property type="evidence" value="ECO:0007669"/>
    <property type="project" value="Ensembl"/>
</dbReference>
<dbReference type="GO" id="GO:0045893">
    <property type="term" value="P:positive regulation of DNA-templated transcription"/>
    <property type="evidence" value="ECO:0000314"/>
    <property type="project" value="UniProtKB"/>
</dbReference>
<dbReference type="GO" id="GO:0045944">
    <property type="term" value="P:positive regulation of transcription by RNA polymerase II"/>
    <property type="evidence" value="ECO:0000315"/>
    <property type="project" value="UniProtKB"/>
</dbReference>
<dbReference type="GO" id="GO:0006355">
    <property type="term" value="P:regulation of DNA-templated transcription"/>
    <property type="evidence" value="ECO:0000314"/>
    <property type="project" value="UniProtKB"/>
</dbReference>
<dbReference type="GO" id="GO:0006357">
    <property type="term" value="P:regulation of transcription by RNA polymerase II"/>
    <property type="evidence" value="ECO:0000318"/>
    <property type="project" value="GO_Central"/>
</dbReference>
<dbReference type="GO" id="GO:0030217">
    <property type="term" value="P:T cell differentiation"/>
    <property type="evidence" value="ECO:0007669"/>
    <property type="project" value="Ensembl"/>
</dbReference>
<dbReference type="GO" id="GO:0001829">
    <property type="term" value="P:trophectodermal cell differentiation"/>
    <property type="evidence" value="ECO:0007669"/>
    <property type="project" value="Ensembl"/>
</dbReference>
<dbReference type="CDD" id="cd22537">
    <property type="entry name" value="SP3_N"/>
    <property type="match status" value="1"/>
</dbReference>
<dbReference type="FunFam" id="3.30.160.60:FF:000014">
    <property type="entry name" value="Transcription factor Sp3"/>
    <property type="match status" value="1"/>
</dbReference>
<dbReference type="FunFam" id="3.30.160.60:FF:000026">
    <property type="entry name" value="Transcription factor Sp3"/>
    <property type="match status" value="1"/>
</dbReference>
<dbReference type="FunFam" id="3.30.160.60:FF:000061">
    <property type="entry name" value="Transcription factor Sp3"/>
    <property type="match status" value="1"/>
</dbReference>
<dbReference type="Gene3D" id="3.30.160.60">
    <property type="entry name" value="Classic Zinc Finger"/>
    <property type="match status" value="3"/>
</dbReference>
<dbReference type="InterPro" id="IPR036236">
    <property type="entry name" value="Znf_C2H2_sf"/>
</dbReference>
<dbReference type="InterPro" id="IPR013087">
    <property type="entry name" value="Znf_C2H2_type"/>
</dbReference>
<dbReference type="PANTHER" id="PTHR23235">
    <property type="entry name" value="KRUEPPEL-LIKE TRANSCRIPTION FACTOR"/>
    <property type="match status" value="1"/>
</dbReference>
<dbReference type="PANTHER" id="PTHR23235:SF3">
    <property type="entry name" value="TRANSCRIPTION FACTOR SP3"/>
    <property type="match status" value="1"/>
</dbReference>
<dbReference type="Pfam" id="PF00096">
    <property type="entry name" value="zf-C2H2"/>
    <property type="match status" value="3"/>
</dbReference>
<dbReference type="SMART" id="SM00355">
    <property type="entry name" value="ZnF_C2H2"/>
    <property type="match status" value="3"/>
</dbReference>
<dbReference type="SUPFAM" id="SSF57667">
    <property type="entry name" value="beta-beta-alpha zinc fingers"/>
    <property type="match status" value="2"/>
</dbReference>
<dbReference type="PROSITE" id="PS00028">
    <property type="entry name" value="ZINC_FINGER_C2H2_1"/>
    <property type="match status" value="3"/>
</dbReference>
<dbReference type="PROSITE" id="PS50157">
    <property type="entry name" value="ZINC_FINGER_C2H2_2"/>
    <property type="match status" value="3"/>
</dbReference>
<keyword id="KW-0007">Acetylation</keyword>
<keyword id="KW-0010">Activator</keyword>
<keyword id="KW-0024">Alternative initiation</keyword>
<keyword id="KW-0025">Alternative splicing</keyword>
<keyword id="KW-0238">DNA-binding</keyword>
<keyword id="KW-1017">Isopeptide bond</keyword>
<keyword id="KW-0479">Metal-binding</keyword>
<keyword id="KW-0539">Nucleus</keyword>
<keyword id="KW-0597">Phosphoprotein</keyword>
<keyword id="KW-1267">Proteomics identification</keyword>
<keyword id="KW-1185">Reference proteome</keyword>
<keyword id="KW-0677">Repeat</keyword>
<keyword id="KW-0678">Repressor</keyword>
<keyword id="KW-0804">Transcription</keyword>
<keyword id="KW-0805">Transcription regulation</keyword>
<keyword id="KW-0832">Ubl conjugation</keyword>
<keyword id="KW-0862">Zinc</keyword>
<keyword id="KW-0863">Zinc-finger</keyword>
<gene>
    <name type="primary">SP3</name>
</gene>